<gene>
    <name type="ordered locus">APP7_1801</name>
</gene>
<keyword id="KW-0408">Iron</keyword>
<sequence>MARTVFCEYLKQEAEGLDFQLYPGELGKRIFDSISKQAWSEWIKKQTMLVNEKKLSMMNAEHRKLLETEMVNFLFEGKEVQIEGYVPVEQK</sequence>
<comment type="function">
    <text evidence="1">Could be a mediator in iron transactions between iron acquisition and iron-requiring processes, such as synthesis and/or repair of Fe-S clusters in biosynthetic enzymes.</text>
</comment>
<comment type="similarity">
    <text evidence="1">Belongs to the Fe(2+)-trafficking protein family.</text>
</comment>
<organism>
    <name type="scientific">Actinobacillus pleuropneumoniae serotype 7 (strain AP76)</name>
    <dbReference type="NCBI Taxonomy" id="537457"/>
    <lineage>
        <taxon>Bacteria</taxon>
        <taxon>Pseudomonadati</taxon>
        <taxon>Pseudomonadota</taxon>
        <taxon>Gammaproteobacteria</taxon>
        <taxon>Pasteurellales</taxon>
        <taxon>Pasteurellaceae</taxon>
        <taxon>Actinobacillus</taxon>
    </lineage>
</organism>
<proteinExistence type="inferred from homology"/>
<reference key="1">
    <citation type="submission" date="2008-06" db="EMBL/GenBank/DDBJ databases">
        <title>Genome and proteome analysis of A. pleuropneumoniae serotype 7.</title>
        <authorList>
            <person name="Linke B."/>
            <person name="Buettner F."/>
            <person name="Martinez-Arias R."/>
            <person name="Goesmann A."/>
            <person name="Baltes N."/>
            <person name="Tegetmeyer H."/>
            <person name="Singh M."/>
            <person name="Gerlach G.F."/>
        </authorList>
    </citation>
    <scope>NUCLEOTIDE SEQUENCE [LARGE SCALE GENOMIC DNA]</scope>
    <source>
        <strain>AP76</strain>
    </source>
</reference>
<dbReference type="EMBL" id="CP001091">
    <property type="protein sequence ID" value="ACE62453.1"/>
    <property type="molecule type" value="Genomic_DNA"/>
</dbReference>
<dbReference type="RefSeq" id="WP_005599252.1">
    <property type="nucleotide sequence ID" value="NC_010939.1"/>
</dbReference>
<dbReference type="SMR" id="B3GYW7"/>
<dbReference type="KEGG" id="apa:APP7_1801"/>
<dbReference type="HOGENOM" id="CLU_170994_0_0_6"/>
<dbReference type="Proteomes" id="UP000001226">
    <property type="component" value="Chromosome"/>
</dbReference>
<dbReference type="GO" id="GO:0005829">
    <property type="term" value="C:cytosol"/>
    <property type="evidence" value="ECO:0007669"/>
    <property type="project" value="TreeGrafter"/>
</dbReference>
<dbReference type="GO" id="GO:0005506">
    <property type="term" value="F:iron ion binding"/>
    <property type="evidence" value="ECO:0007669"/>
    <property type="project" value="UniProtKB-UniRule"/>
</dbReference>
<dbReference type="GO" id="GO:0034599">
    <property type="term" value="P:cellular response to oxidative stress"/>
    <property type="evidence" value="ECO:0007669"/>
    <property type="project" value="TreeGrafter"/>
</dbReference>
<dbReference type="FunFam" id="1.10.3880.10:FF:000001">
    <property type="entry name" value="Probable Fe(2+)-trafficking protein"/>
    <property type="match status" value="1"/>
</dbReference>
<dbReference type="Gene3D" id="1.10.3880.10">
    <property type="entry name" value="Fe(II) trafficking protein YggX"/>
    <property type="match status" value="1"/>
</dbReference>
<dbReference type="HAMAP" id="MF_00686">
    <property type="entry name" value="Fe_traffic_YggX"/>
    <property type="match status" value="1"/>
</dbReference>
<dbReference type="InterPro" id="IPR007457">
    <property type="entry name" value="Fe_traffick_prot_YggX"/>
</dbReference>
<dbReference type="InterPro" id="IPR036766">
    <property type="entry name" value="Fe_traffick_prot_YggX_sf"/>
</dbReference>
<dbReference type="NCBIfam" id="NF003817">
    <property type="entry name" value="PRK05408.1"/>
    <property type="match status" value="1"/>
</dbReference>
<dbReference type="PANTHER" id="PTHR36965">
    <property type="entry name" value="FE(2+)-TRAFFICKING PROTEIN-RELATED"/>
    <property type="match status" value="1"/>
</dbReference>
<dbReference type="PANTHER" id="PTHR36965:SF1">
    <property type="entry name" value="FE(2+)-TRAFFICKING PROTEIN-RELATED"/>
    <property type="match status" value="1"/>
</dbReference>
<dbReference type="Pfam" id="PF04362">
    <property type="entry name" value="Iron_traffic"/>
    <property type="match status" value="1"/>
</dbReference>
<dbReference type="PIRSF" id="PIRSF029827">
    <property type="entry name" value="Fe_traffic_YggX"/>
    <property type="match status" value="1"/>
</dbReference>
<dbReference type="SUPFAM" id="SSF111148">
    <property type="entry name" value="YggX-like"/>
    <property type="match status" value="1"/>
</dbReference>
<name>FETP_ACTP7</name>
<accession>B3GYW7</accession>
<protein>
    <recommendedName>
        <fullName evidence="1">Probable Fe(2+)-trafficking protein</fullName>
    </recommendedName>
</protein>
<evidence type="ECO:0000255" key="1">
    <source>
        <dbReference type="HAMAP-Rule" id="MF_00686"/>
    </source>
</evidence>
<feature type="chain" id="PRO_1000131823" description="Probable Fe(2+)-trafficking protein">
    <location>
        <begin position="1"/>
        <end position="91"/>
    </location>
</feature>